<protein>
    <recommendedName>
        <fullName evidence="1">Arginine deiminase</fullName>
        <shortName evidence="1">ADI</shortName>
        <ecNumber evidence="1">3.5.3.6</ecNumber>
    </recommendedName>
    <alternativeName>
        <fullName evidence="1">Arginine dihydrolase</fullName>
        <shortName evidence="1">AD</shortName>
    </alternativeName>
</protein>
<accession>Q81II1</accession>
<organism>
    <name type="scientific">Bacillus cereus (strain ATCC 14579 / DSM 31 / CCUG 7414 / JCM 2152 / NBRC 15305 / NCIMB 9373 / NCTC 2599 / NRRL B-3711)</name>
    <dbReference type="NCBI Taxonomy" id="226900"/>
    <lineage>
        <taxon>Bacteria</taxon>
        <taxon>Bacillati</taxon>
        <taxon>Bacillota</taxon>
        <taxon>Bacilli</taxon>
        <taxon>Bacillales</taxon>
        <taxon>Bacillaceae</taxon>
        <taxon>Bacillus</taxon>
        <taxon>Bacillus cereus group</taxon>
    </lineage>
</organism>
<evidence type="ECO:0000255" key="1">
    <source>
        <dbReference type="HAMAP-Rule" id="MF_00242"/>
    </source>
</evidence>
<comment type="catalytic activity">
    <reaction evidence="1">
        <text>L-arginine + H2O = L-citrulline + NH4(+)</text>
        <dbReference type="Rhea" id="RHEA:19597"/>
        <dbReference type="ChEBI" id="CHEBI:15377"/>
        <dbReference type="ChEBI" id="CHEBI:28938"/>
        <dbReference type="ChEBI" id="CHEBI:32682"/>
        <dbReference type="ChEBI" id="CHEBI:57743"/>
        <dbReference type="EC" id="3.5.3.6"/>
    </reaction>
</comment>
<comment type="pathway">
    <text evidence="1">Amino-acid degradation; L-arginine degradation via ADI pathway; carbamoyl phosphate from L-arginine: step 1/2.</text>
</comment>
<comment type="subcellular location">
    <subcellularLocation>
        <location evidence="1">Cytoplasm</location>
    </subcellularLocation>
</comment>
<comment type="similarity">
    <text evidence="1">Belongs to the arginine deiminase family.</text>
</comment>
<proteinExistence type="inferred from homology"/>
<reference key="1">
    <citation type="journal article" date="2003" name="Nature">
        <title>Genome sequence of Bacillus cereus and comparative analysis with Bacillus anthracis.</title>
        <authorList>
            <person name="Ivanova N."/>
            <person name="Sorokin A."/>
            <person name="Anderson I."/>
            <person name="Galleron N."/>
            <person name="Candelon B."/>
            <person name="Kapatral V."/>
            <person name="Bhattacharyya A."/>
            <person name="Reznik G."/>
            <person name="Mikhailova N."/>
            <person name="Lapidus A."/>
            <person name="Chu L."/>
            <person name="Mazur M."/>
            <person name="Goltsman E."/>
            <person name="Larsen N."/>
            <person name="D'Souza M."/>
            <person name="Walunas T."/>
            <person name="Grechkin Y."/>
            <person name="Pusch G."/>
            <person name="Haselkorn R."/>
            <person name="Fonstein M."/>
            <person name="Ehrlich S.D."/>
            <person name="Overbeek R."/>
            <person name="Kyrpides N.C."/>
        </authorList>
    </citation>
    <scope>NUCLEOTIDE SEQUENCE [LARGE SCALE GENOMIC DNA]</scope>
    <source>
        <strain>ATCC 14579 / DSM 31 / CCUG 7414 / JCM 2152 / NBRC 15305 / NCIMB 9373 / NCTC 2599 / NRRL B-3711</strain>
    </source>
</reference>
<dbReference type="EC" id="3.5.3.6" evidence="1"/>
<dbReference type="EMBL" id="AE016877">
    <property type="protein sequence ID" value="AAP07446.1"/>
    <property type="molecule type" value="Genomic_DNA"/>
</dbReference>
<dbReference type="RefSeq" id="NP_830245.1">
    <property type="nucleotide sequence ID" value="NC_004722.1"/>
</dbReference>
<dbReference type="RefSeq" id="WP_000682331.1">
    <property type="nucleotide sequence ID" value="NZ_CP138336.1"/>
</dbReference>
<dbReference type="SMR" id="Q81II1"/>
<dbReference type="STRING" id="226900.BC_0406"/>
<dbReference type="GeneID" id="72447209"/>
<dbReference type="KEGG" id="bce:BC0406"/>
<dbReference type="PATRIC" id="fig|226900.8.peg.376"/>
<dbReference type="HOGENOM" id="CLU_052662_0_1_9"/>
<dbReference type="OrthoDB" id="9807502at2"/>
<dbReference type="UniPathway" id="UPA00254">
    <property type="reaction ID" value="UER00364"/>
</dbReference>
<dbReference type="Proteomes" id="UP000001417">
    <property type="component" value="Chromosome"/>
</dbReference>
<dbReference type="GO" id="GO:0005737">
    <property type="term" value="C:cytoplasm"/>
    <property type="evidence" value="ECO:0007669"/>
    <property type="project" value="UniProtKB-SubCell"/>
</dbReference>
<dbReference type="GO" id="GO:0016990">
    <property type="term" value="F:arginine deiminase activity"/>
    <property type="evidence" value="ECO:0000318"/>
    <property type="project" value="GO_Central"/>
</dbReference>
<dbReference type="GO" id="GO:0019547">
    <property type="term" value="P:arginine catabolic process to ornithine"/>
    <property type="evidence" value="ECO:0007669"/>
    <property type="project" value="UniProtKB-UniRule"/>
</dbReference>
<dbReference type="GO" id="GO:0019546">
    <property type="term" value="P:arginine deiminase pathway"/>
    <property type="evidence" value="ECO:0000318"/>
    <property type="project" value="GO_Central"/>
</dbReference>
<dbReference type="FunFam" id="1.10.3930.10:FF:000001">
    <property type="entry name" value="Arginine deiminase"/>
    <property type="match status" value="1"/>
</dbReference>
<dbReference type="Gene3D" id="1.10.3930.10">
    <property type="entry name" value="Arginine deiminase"/>
    <property type="match status" value="1"/>
</dbReference>
<dbReference type="Gene3D" id="3.75.10.10">
    <property type="entry name" value="L-arginine/glycine Amidinotransferase, Chain A"/>
    <property type="match status" value="1"/>
</dbReference>
<dbReference type="HAMAP" id="MF_00242">
    <property type="entry name" value="Arg_deiminase"/>
    <property type="match status" value="1"/>
</dbReference>
<dbReference type="InterPro" id="IPR003876">
    <property type="entry name" value="Arg_deiminase"/>
</dbReference>
<dbReference type="NCBIfam" id="TIGR01078">
    <property type="entry name" value="arcA"/>
    <property type="match status" value="1"/>
</dbReference>
<dbReference type="NCBIfam" id="NF002381">
    <property type="entry name" value="PRK01388.1"/>
    <property type="match status" value="1"/>
</dbReference>
<dbReference type="PANTHER" id="PTHR47271">
    <property type="entry name" value="ARGININE DEIMINASE"/>
    <property type="match status" value="1"/>
</dbReference>
<dbReference type="PANTHER" id="PTHR47271:SF2">
    <property type="entry name" value="ARGININE DEIMINASE"/>
    <property type="match status" value="1"/>
</dbReference>
<dbReference type="Pfam" id="PF02274">
    <property type="entry name" value="ADI"/>
    <property type="match status" value="1"/>
</dbReference>
<dbReference type="PIRSF" id="PIRSF006356">
    <property type="entry name" value="Arg_deiminase"/>
    <property type="match status" value="1"/>
</dbReference>
<dbReference type="PRINTS" id="PR01466">
    <property type="entry name" value="ARGDEIMINASE"/>
</dbReference>
<dbReference type="SUPFAM" id="SSF55909">
    <property type="entry name" value="Pentein"/>
    <property type="match status" value="1"/>
</dbReference>
<keyword id="KW-0056">Arginine metabolism</keyword>
<keyword id="KW-0963">Cytoplasm</keyword>
<keyword id="KW-0378">Hydrolase</keyword>
<keyword id="KW-1185">Reference proteome</keyword>
<sequence>MKHPIHVTSEIGELQTVLLKRPGKEVENLTPDYLQQLLFDDIPYLPIIQKEHDYFAQTLRNRGVEVLYLEKLAAEALVDKKLREEFVDRILKEGQADVNVAHQTLKEYLLSFSNEELIQKIMGGVRKNEIETSKKTHLYELMEDHYPFYLDPMPNLYFTRDPAASVGDGLTINKMREPARRRESLFMEYIIKYHPRFAKHNVPIWLDRDYKFPIEGGDELILNEETIAIGVSARTSAKAIERLAKNLFSRQNKIKKVLAIEIPKCRAFMHLDTVFTMVDYDKFTIHPAIQGPKGNMNIYILEKGSDEETLKITHRTSLMEALKEVLGLSELVLIPCGGGDVIASAREQWNDGSNTLAIAPGVVVTYDRNYVSNTLLREHGIEVIEVLSSELSRGRGGPRCMSMPIVRKDI</sequence>
<gene>
    <name evidence="1" type="primary">arcA</name>
    <name type="ordered locus">BC_0406</name>
</gene>
<feature type="chain" id="PRO_0000182199" description="Arginine deiminase">
    <location>
        <begin position="1"/>
        <end position="410"/>
    </location>
</feature>
<feature type="active site" description="Amidino-cysteine intermediate" evidence="1">
    <location>
        <position position="400"/>
    </location>
</feature>
<name>ARCA_BACCR</name>